<organism>
    <name type="scientific">Fusobacterium nucleatum subsp. nucleatum (strain ATCC 25586 / DSM 15643 / BCRC 10681 / CIP 101130 / JCM 8532 / KCTC 2640 / LMG 13131 / VPI 4355)</name>
    <dbReference type="NCBI Taxonomy" id="190304"/>
    <lineage>
        <taxon>Bacteria</taxon>
        <taxon>Fusobacteriati</taxon>
        <taxon>Fusobacteriota</taxon>
        <taxon>Fusobacteriia</taxon>
        <taxon>Fusobacteriales</taxon>
        <taxon>Fusobacteriaceae</taxon>
        <taxon>Fusobacterium</taxon>
    </lineage>
</organism>
<dbReference type="EMBL" id="AE009951">
    <property type="protein sequence ID" value="AAL95566.1"/>
    <property type="molecule type" value="Genomic_DNA"/>
</dbReference>
<dbReference type="RefSeq" id="NP_604267.1">
    <property type="nucleotide sequence ID" value="NC_003454.1"/>
</dbReference>
<dbReference type="RefSeq" id="WP_011017105.1">
    <property type="nucleotide sequence ID" value="NZ_OZ209243.1"/>
</dbReference>
<dbReference type="SMR" id="Q8R616"/>
<dbReference type="STRING" id="190304.FN1370"/>
<dbReference type="PaxDb" id="190304-FN1370"/>
<dbReference type="EnsemblBacteria" id="AAL95566">
    <property type="protein sequence ID" value="AAL95566"/>
    <property type="gene ID" value="FN1370"/>
</dbReference>
<dbReference type="KEGG" id="fnu:FN1370"/>
<dbReference type="PATRIC" id="fig|190304.8.peg.1935"/>
<dbReference type="eggNOG" id="COG0792">
    <property type="taxonomic scope" value="Bacteria"/>
</dbReference>
<dbReference type="HOGENOM" id="CLU_115353_3_1_0"/>
<dbReference type="InParanoid" id="Q8R616"/>
<dbReference type="BioCyc" id="FNUC190304:G1FZS-1942-MONOMER"/>
<dbReference type="Proteomes" id="UP000002521">
    <property type="component" value="Chromosome"/>
</dbReference>
<dbReference type="GO" id="GO:0003676">
    <property type="term" value="F:nucleic acid binding"/>
    <property type="evidence" value="ECO:0007669"/>
    <property type="project" value="InterPro"/>
</dbReference>
<dbReference type="CDD" id="cd20736">
    <property type="entry name" value="PoNe_Nuclease"/>
    <property type="match status" value="1"/>
</dbReference>
<dbReference type="Gene3D" id="3.40.1350.10">
    <property type="match status" value="1"/>
</dbReference>
<dbReference type="HAMAP" id="MF_00048">
    <property type="entry name" value="UPF0102"/>
    <property type="match status" value="1"/>
</dbReference>
<dbReference type="InterPro" id="IPR011335">
    <property type="entry name" value="Restrct_endonuc-II-like"/>
</dbReference>
<dbReference type="InterPro" id="IPR011856">
    <property type="entry name" value="tRNA_endonuc-like_dom_sf"/>
</dbReference>
<dbReference type="InterPro" id="IPR003509">
    <property type="entry name" value="UPF0102_YraN-like"/>
</dbReference>
<dbReference type="NCBIfam" id="NF009150">
    <property type="entry name" value="PRK12497.1-3"/>
    <property type="match status" value="1"/>
</dbReference>
<dbReference type="NCBIfam" id="TIGR00252">
    <property type="entry name" value="YraN family protein"/>
    <property type="match status" value="1"/>
</dbReference>
<dbReference type="PANTHER" id="PTHR34039">
    <property type="entry name" value="UPF0102 PROTEIN YRAN"/>
    <property type="match status" value="1"/>
</dbReference>
<dbReference type="PANTHER" id="PTHR34039:SF1">
    <property type="entry name" value="UPF0102 PROTEIN YRAN"/>
    <property type="match status" value="1"/>
</dbReference>
<dbReference type="Pfam" id="PF02021">
    <property type="entry name" value="UPF0102"/>
    <property type="match status" value="1"/>
</dbReference>
<dbReference type="SUPFAM" id="SSF52980">
    <property type="entry name" value="Restriction endonuclease-like"/>
    <property type="match status" value="1"/>
</dbReference>
<name>Y1370_FUSNN</name>
<sequence>MNTREIGNEYEDKSVEILVKEDYKILERNYQNKFGEIDIIAEKNKEIIFIEVKYRKTNKFGYGYEAVDRRKIMKILKLANYYIQSKKYQDYKIRFDCMSYLGDELDWIKNIVWGDEVGF</sequence>
<protein>
    <recommendedName>
        <fullName evidence="1">UPF0102 protein FN1370</fullName>
    </recommendedName>
</protein>
<gene>
    <name type="ordered locus">FN1370</name>
</gene>
<proteinExistence type="inferred from homology"/>
<keyword id="KW-1185">Reference proteome</keyword>
<reference key="1">
    <citation type="journal article" date="2002" name="J. Bacteriol.">
        <title>Genome sequence and analysis of the oral bacterium Fusobacterium nucleatum strain ATCC 25586.</title>
        <authorList>
            <person name="Kapatral V."/>
            <person name="Anderson I."/>
            <person name="Ivanova N."/>
            <person name="Reznik G."/>
            <person name="Los T."/>
            <person name="Lykidis A."/>
            <person name="Bhattacharyya A."/>
            <person name="Bartman A."/>
            <person name="Gardner W."/>
            <person name="Grechkin G."/>
            <person name="Zhu L."/>
            <person name="Vasieva O."/>
            <person name="Chu L."/>
            <person name="Kogan Y."/>
            <person name="Chaga O."/>
            <person name="Goltsman E."/>
            <person name="Bernal A."/>
            <person name="Larsen N."/>
            <person name="D'Souza M."/>
            <person name="Walunas T."/>
            <person name="Pusch G."/>
            <person name="Haselkorn R."/>
            <person name="Fonstein M."/>
            <person name="Kyrpides N.C."/>
            <person name="Overbeek R."/>
        </authorList>
    </citation>
    <scope>NUCLEOTIDE SEQUENCE [LARGE SCALE GENOMIC DNA]</scope>
    <source>
        <strain>ATCC 25586 / DSM 15643 / BCRC 10681 / CIP 101130 / JCM 8532 / KCTC 2640 / LMG 13131 / VPI 4355</strain>
    </source>
</reference>
<evidence type="ECO:0000255" key="1">
    <source>
        <dbReference type="HAMAP-Rule" id="MF_00048"/>
    </source>
</evidence>
<comment type="similarity">
    <text evidence="1">Belongs to the UPF0102 family.</text>
</comment>
<accession>Q8R616</accession>
<feature type="chain" id="PRO_0000167352" description="UPF0102 protein FN1370">
    <location>
        <begin position="1"/>
        <end position="119"/>
    </location>
</feature>